<protein>
    <recommendedName>
        <fullName evidence="1">Small ribosomal subunit protein uS14</fullName>
    </recommendedName>
    <alternativeName>
        <fullName evidence="2">30S ribosomal protein S14</fullName>
    </alternativeName>
</protein>
<reference key="1">
    <citation type="journal article" date="2010" name="J. Bacteriol.">
        <title>Complete genome sequence of Beijerinckia indica subsp. indica.</title>
        <authorList>
            <person name="Tamas I."/>
            <person name="Dedysh S.N."/>
            <person name="Liesack W."/>
            <person name="Stott M.B."/>
            <person name="Alam M."/>
            <person name="Murrell J.C."/>
            <person name="Dunfield P.F."/>
        </authorList>
    </citation>
    <scope>NUCLEOTIDE SEQUENCE [LARGE SCALE GENOMIC DNA]</scope>
    <source>
        <strain>ATCC 9039 / DSM 1715 / NCIMB 8712</strain>
    </source>
</reference>
<gene>
    <name evidence="1" type="primary">rpsN</name>
    <name type="ordered locus">Bind_1367</name>
</gene>
<keyword id="KW-1185">Reference proteome</keyword>
<keyword id="KW-0687">Ribonucleoprotein</keyword>
<keyword id="KW-0689">Ribosomal protein</keyword>
<keyword id="KW-0694">RNA-binding</keyword>
<keyword id="KW-0699">rRNA-binding</keyword>
<name>RS14_BEII9</name>
<evidence type="ECO:0000255" key="1">
    <source>
        <dbReference type="HAMAP-Rule" id="MF_00537"/>
    </source>
</evidence>
<evidence type="ECO:0000305" key="2"/>
<organism>
    <name type="scientific">Beijerinckia indica subsp. indica (strain ATCC 9039 / DSM 1715 / NCIMB 8712)</name>
    <dbReference type="NCBI Taxonomy" id="395963"/>
    <lineage>
        <taxon>Bacteria</taxon>
        <taxon>Pseudomonadati</taxon>
        <taxon>Pseudomonadota</taxon>
        <taxon>Alphaproteobacteria</taxon>
        <taxon>Hyphomicrobiales</taxon>
        <taxon>Beijerinckiaceae</taxon>
        <taxon>Beijerinckia</taxon>
    </lineage>
</organism>
<feature type="chain" id="PRO_1000128310" description="Small ribosomal subunit protein uS14">
    <location>
        <begin position="1"/>
        <end position="101"/>
    </location>
</feature>
<accession>B2IK75</accession>
<dbReference type="EMBL" id="CP001016">
    <property type="protein sequence ID" value="ACB95007.1"/>
    <property type="molecule type" value="Genomic_DNA"/>
</dbReference>
<dbReference type="RefSeq" id="WP_012384364.1">
    <property type="nucleotide sequence ID" value="NC_010581.1"/>
</dbReference>
<dbReference type="SMR" id="B2IK75"/>
<dbReference type="STRING" id="395963.Bind_1367"/>
<dbReference type="KEGG" id="bid:Bind_1367"/>
<dbReference type="eggNOG" id="COG0199">
    <property type="taxonomic scope" value="Bacteria"/>
</dbReference>
<dbReference type="HOGENOM" id="CLU_139869_0_1_5"/>
<dbReference type="OrthoDB" id="9810484at2"/>
<dbReference type="Proteomes" id="UP000001695">
    <property type="component" value="Chromosome"/>
</dbReference>
<dbReference type="GO" id="GO:0005737">
    <property type="term" value="C:cytoplasm"/>
    <property type="evidence" value="ECO:0007669"/>
    <property type="project" value="UniProtKB-ARBA"/>
</dbReference>
<dbReference type="GO" id="GO:0015935">
    <property type="term" value="C:small ribosomal subunit"/>
    <property type="evidence" value="ECO:0007669"/>
    <property type="project" value="TreeGrafter"/>
</dbReference>
<dbReference type="GO" id="GO:0019843">
    <property type="term" value="F:rRNA binding"/>
    <property type="evidence" value="ECO:0007669"/>
    <property type="project" value="UniProtKB-UniRule"/>
</dbReference>
<dbReference type="GO" id="GO:0003735">
    <property type="term" value="F:structural constituent of ribosome"/>
    <property type="evidence" value="ECO:0007669"/>
    <property type="project" value="InterPro"/>
</dbReference>
<dbReference type="GO" id="GO:0006412">
    <property type="term" value="P:translation"/>
    <property type="evidence" value="ECO:0007669"/>
    <property type="project" value="UniProtKB-UniRule"/>
</dbReference>
<dbReference type="FunFam" id="1.10.287.1480:FF:000001">
    <property type="entry name" value="30S ribosomal protein S14"/>
    <property type="match status" value="1"/>
</dbReference>
<dbReference type="Gene3D" id="1.10.287.1480">
    <property type="match status" value="1"/>
</dbReference>
<dbReference type="HAMAP" id="MF_00537">
    <property type="entry name" value="Ribosomal_uS14_1"/>
    <property type="match status" value="1"/>
</dbReference>
<dbReference type="InterPro" id="IPR001209">
    <property type="entry name" value="Ribosomal_uS14"/>
</dbReference>
<dbReference type="InterPro" id="IPR023036">
    <property type="entry name" value="Ribosomal_uS14_bac/plastid"/>
</dbReference>
<dbReference type="InterPro" id="IPR018271">
    <property type="entry name" value="Ribosomal_uS14_CS"/>
</dbReference>
<dbReference type="NCBIfam" id="NF006477">
    <property type="entry name" value="PRK08881.1"/>
    <property type="match status" value="1"/>
</dbReference>
<dbReference type="PANTHER" id="PTHR19836">
    <property type="entry name" value="30S RIBOSOMAL PROTEIN S14"/>
    <property type="match status" value="1"/>
</dbReference>
<dbReference type="PANTHER" id="PTHR19836:SF19">
    <property type="entry name" value="SMALL RIBOSOMAL SUBUNIT PROTEIN US14M"/>
    <property type="match status" value="1"/>
</dbReference>
<dbReference type="Pfam" id="PF00253">
    <property type="entry name" value="Ribosomal_S14"/>
    <property type="match status" value="1"/>
</dbReference>
<dbReference type="SUPFAM" id="SSF57716">
    <property type="entry name" value="Glucocorticoid receptor-like (DNA-binding domain)"/>
    <property type="match status" value="1"/>
</dbReference>
<dbReference type="PROSITE" id="PS00527">
    <property type="entry name" value="RIBOSOMAL_S14"/>
    <property type="match status" value="1"/>
</dbReference>
<comment type="function">
    <text evidence="1">Binds 16S rRNA, required for the assembly of 30S particles and may also be responsible for determining the conformation of the 16S rRNA at the A site.</text>
</comment>
<comment type="subunit">
    <text evidence="1">Part of the 30S ribosomal subunit. Contacts proteins S3 and S10.</text>
</comment>
<comment type="similarity">
    <text evidence="1">Belongs to the universal ribosomal protein uS14 family.</text>
</comment>
<sequence>MAKKSSVEKNKHRAQLVKQYAGRRARLKAIANDETLSMEERFEARLKLAELPRNSAPVRLRNRCEISGRPRAFTRKMKMSRIAVRELGSQGLIPGLVKSSW</sequence>
<proteinExistence type="inferred from homology"/>